<organism>
    <name type="scientific">Alkaliphilus metalliredigens (strain QYMF)</name>
    <dbReference type="NCBI Taxonomy" id="293826"/>
    <lineage>
        <taxon>Bacteria</taxon>
        <taxon>Bacillati</taxon>
        <taxon>Bacillota</taxon>
        <taxon>Clostridia</taxon>
        <taxon>Peptostreptococcales</taxon>
        <taxon>Natronincolaceae</taxon>
        <taxon>Alkaliphilus</taxon>
    </lineage>
</organism>
<proteinExistence type="inferred from homology"/>
<feature type="chain" id="PRO_0000367158" description="UPF0173 metal-dependent hydrolase Amet_4625">
    <location>
        <begin position="1"/>
        <end position="223"/>
    </location>
</feature>
<accession>A6TWX8</accession>
<gene>
    <name type="ordered locus">Amet_4625</name>
</gene>
<comment type="similarity">
    <text evidence="1">Belongs to the UPF0173 family.</text>
</comment>
<keyword id="KW-0378">Hydrolase</keyword>
<keyword id="KW-1185">Reference proteome</keyword>
<evidence type="ECO:0000255" key="1">
    <source>
        <dbReference type="HAMAP-Rule" id="MF_00457"/>
    </source>
</evidence>
<sequence length="223" mass="24272">MKIQYLGHSAFYVEAGEMKALIDPFIPETLTHPIFSFADITHIFITHGHGDHLGSTLSIVRESNATVITNYEISLYLQSKGVNCHSMHIGGRTTMDFGTVKMTPALHGSAIETDEGLVCGGNPGGFVIECQGKKLYHAGDTGLTMDMKLLAVEEIDVALLPIGGNFTMDVQDAVRAVAFIGAKVAIPMHYNTFPVITASPESFKEQVKTSQVHILNVEEVYNF</sequence>
<dbReference type="EMBL" id="CP000724">
    <property type="protein sequence ID" value="ABR50696.1"/>
    <property type="molecule type" value="Genomic_DNA"/>
</dbReference>
<dbReference type="RefSeq" id="WP_012065584.1">
    <property type="nucleotide sequence ID" value="NC_009633.1"/>
</dbReference>
<dbReference type="SMR" id="A6TWX8"/>
<dbReference type="STRING" id="293826.Amet_4625"/>
<dbReference type="KEGG" id="amt:Amet_4625"/>
<dbReference type="eggNOG" id="COG2220">
    <property type="taxonomic scope" value="Bacteria"/>
</dbReference>
<dbReference type="HOGENOM" id="CLU_070010_4_1_9"/>
<dbReference type="OrthoDB" id="9789133at2"/>
<dbReference type="Proteomes" id="UP000001572">
    <property type="component" value="Chromosome"/>
</dbReference>
<dbReference type="GO" id="GO:0016787">
    <property type="term" value="F:hydrolase activity"/>
    <property type="evidence" value="ECO:0007669"/>
    <property type="project" value="UniProtKB-UniRule"/>
</dbReference>
<dbReference type="Gene3D" id="3.60.15.10">
    <property type="entry name" value="Ribonuclease Z/Hydroxyacylglutathione hydrolase-like"/>
    <property type="match status" value="1"/>
</dbReference>
<dbReference type="HAMAP" id="MF_00457">
    <property type="entry name" value="UPF0173"/>
    <property type="match status" value="1"/>
</dbReference>
<dbReference type="InterPro" id="IPR001279">
    <property type="entry name" value="Metallo-B-lactamas"/>
</dbReference>
<dbReference type="InterPro" id="IPR036866">
    <property type="entry name" value="RibonucZ/Hydroxyglut_hydro"/>
</dbReference>
<dbReference type="InterPro" id="IPR022877">
    <property type="entry name" value="UPF0173"/>
</dbReference>
<dbReference type="InterPro" id="IPR050114">
    <property type="entry name" value="UPF0173_UPF0282_UlaG_hydrolase"/>
</dbReference>
<dbReference type="NCBIfam" id="NF001911">
    <property type="entry name" value="PRK00685.1"/>
    <property type="match status" value="1"/>
</dbReference>
<dbReference type="PANTHER" id="PTHR43546:SF3">
    <property type="entry name" value="UPF0173 METAL-DEPENDENT HYDROLASE MJ1163"/>
    <property type="match status" value="1"/>
</dbReference>
<dbReference type="PANTHER" id="PTHR43546">
    <property type="entry name" value="UPF0173 METAL-DEPENDENT HYDROLASE MJ1163-RELATED"/>
    <property type="match status" value="1"/>
</dbReference>
<dbReference type="Pfam" id="PF12706">
    <property type="entry name" value="Lactamase_B_2"/>
    <property type="match status" value="1"/>
</dbReference>
<dbReference type="SMART" id="SM00849">
    <property type="entry name" value="Lactamase_B"/>
    <property type="match status" value="1"/>
</dbReference>
<dbReference type="SUPFAM" id="SSF56281">
    <property type="entry name" value="Metallo-hydrolase/oxidoreductase"/>
    <property type="match status" value="1"/>
</dbReference>
<reference key="1">
    <citation type="journal article" date="2016" name="Genome Announc.">
        <title>Complete genome sequence of Alkaliphilus metalliredigens strain QYMF, an alkaliphilic and metal-reducing bacterium isolated from borax-contaminated leachate ponds.</title>
        <authorList>
            <person name="Hwang C."/>
            <person name="Copeland A."/>
            <person name="Lucas S."/>
            <person name="Lapidus A."/>
            <person name="Barry K."/>
            <person name="Detter J.C."/>
            <person name="Glavina Del Rio T."/>
            <person name="Hammon N."/>
            <person name="Israni S."/>
            <person name="Dalin E."/>
            <person name="Tice H."/>
            <person name="Pitluck S."/>
            <person name="Chertkov O."/>
            <person name="Brettin T."/>
            <person name="Bruce D."/>
            <person name="Han C."/>
            <person name="Schmutz J."/>
            <person name="Larimer F."/>
            <person name="Land M.L."/>
            <person name="Hauser L."/>
            <person name="Kyrpides N."/>
            <person name="Mikhailova N."/>
            <person name="Ye Q."/>
            <person name="Zhou J."/>
            <person name="Richardson P."/>
            <person name="Fields M.W."/>
        </authorList>
    </citation>
    <scope>NUCLEOTIDE SEQUENCE [LARGE SCALE GENOMIC DNA]</scope>
    <source>
        <strain>QYMF</strain>
    </source>
</reference>
<name>Y4625_ALKMQ</name>
<protein>
    <recommendedName>
        <fullName evidence="1">UPF0173 metal-dependent hydrolase Amet_4625</fullName>
    </recommendedName>
</protein>